<sequence>MGNSKLSKEEKEEIIKKTKYTPEDIEQLIKDFKVAAASDKKSGFSQEEFIKFFKVRFSNWDEASMVRMFTLFDSDGNGVIDVKEFITALYLMAKAPTLDKLGFFFDLFDSDKSGYLEREEVDKLVNIVVCCGKGLGYSINDAIDYAVSITSCRHIADYQKGMSREEFIKSASQSENFVKVICFYESPCMQLY</sequence>
<name>CBPK_DICDI</name>
<dbReference type="EMBL" id="AY655132">
    <property type="protein sequence ID" value="AAT72748.1"/>
    <property type="molecule type" value="Genomic_DNA"/>
</dbReference>
<dbReference type="EMBL" id="AAFI02000012">
    <property type="protein sequence ID" value="EAL70072.2"/>
    <property type="status" value="ALT_SEQ"/>
    <property type="molecule type" value="Genomic_DNA"/>
</dbReference>
<dbReference type="RefSeq" id="XP_643889.2">
    <property type="nucleotide sequence ID" value="XM_638797.3"/>
</dbReference>
<dbReference type="SMR" id="Q86IV7"/>
<dbReference type="STRING" id="44689.Q86IV7"/>
<dbReference type="PaxDb" id="44689-DDB0237507"/>
<dbReference type="GeneID" id="8619315"/>
<dbReference type="KEGG" id="ddi:DDB_G0274359"/>
<dbReference type="dictyBase" id="DDB_G0274359">
    <property type="gene designation" value="cbpK"/>
</dbReference>
<dbReference type="VEuPathDB" id="AmoebaDB:DDB_G0274359"/>
<dbReference type="InParanoid" id="Q86IV7"/>
<dbReference type="PhylomeDB" id="Q86IV7"/>
<dbReference type="Reactome" id="R-DDI-2514859">
    <property type="pathway name" value="Inactivation, recovery and regulation of the phototransduction cascade"/>
</dbReference>
<dbReference type="PRO" id="PR:Q86IV7"/>
<dbReference type="Proteomes" id="UP000002195">
    <property type="component" value="Chromosome 2"/>
</dbReference>
<dbReference type="GO" id="GO:0005509">
    <property type="term" value="F:calcium ion binding"/>
    <property type="evidence" value="ECO:0000250"/>
    <property type="project" value="dictyBase"/>
</dbReference>
<dbReference type="GO" id="GO:0009966">
    <property type="term" value="P:regulation of signal transduction"/>
    <property type="evidence" value="ECO:0000318"/>
    <property type="project" value="GO_Central"/>
</dbReference>
<dbReference type="CDD" id="cd00051">
    <property type="entry name" value="EFh"/>
    <property type="match status" value="1"/>
</dbReference>
<dbReference type="FunFam" id="1.10.238.10:FF:000009">
    <property type="entry name" value="Visinin-like protein 1"/>
    <property type="match status" value="1"/>
</dbReference>
<dbReference type="Gene3D" id="1.10.238.10">
    <property type="entry name" value="EF-hand"/>
    <property type="match status" value="1"/>
</dbReference>
<dbReference type="InterPro" id="IPR011992">
    <property type="entry name" value="EF-hand-dom_pair"/>
</dbReference>
<dbReference type="InterPro" id="IPR018247">
    <property type="entry name" value="EF_Hand_1_Ca_BS"/>
</dbReference>
<dbReference type="InterPro" id="IPR002048">
    <property type="entry name" value="EF_hand_dom"/>
</dbReference>
<dbReference type="InterPro" id="IPR028846">
    <property type="entry name" value="Recoverin"/>
</dbReference>
<dbReference type="PANTHER" id="PTHR23055">
    <property type="entry name" value="CALCIUM BINDING PROTEINS"/>
    <property type="match status" value="1"/>
</dbReference>
<dbReference type="PANTHER" id="PTHR23055:SF96">
    <property type="entry name" value="CALCIUM-BINDING PROTEIN J-RELATED"/>
    <property type="match status" value="1"/>
</dbReference>
<dbReference type="Pfam" id="PF00036">
    <property type="entry name" value="EF-hand_1"/>
    <property type="match status" value="1"/>
</dbReference>
<dbReference type="PRINTS" id="PR00450">
    <property type="entry name" value="RECOVERIN"/>
</dbReference>
<dbReference type="SMART" id="SM00054">
    <property type="entry name" value="EFh"/>
    <property type="match status" value="2"/>
</dbReference>
<dbReference type="SUPFAM" id="SSF47473">
    <property type="entry name" value="EF-hand"/>
    <property type="match status" value="1"/>
</dbReference>
<dbReference type="PROSITE" id="PS00018">
    <property type="entry name" value="EF_HAND_1"/>
    <property type="match status" value="2"/>
</dbReference>
<dbReference type="PROSITE" id="PS50222">
    <property type="entry name" value="EF_HAND_2"/>
    <property type="match status" value="2"/>
</dbReference>
<organism>
    <name type="scientific">Dictyostelium discoideum</name>
    <name type="common">Social amoeba</name>
    <dbReference type="NCBI Taxonomy" id="44689"/>
    <lineage>
        <taxon>Eukaryota</taxon>
        <taxon>Amoebozoa</taxon>
        <taxon>Evosea</taxon>
        <taxon>Eumycetozoa</taxon>
        <taxon>Dictyostelia</taxon>
        <taxon>Dictyosteliales</taxon>
        <taxon>Dictyosteliaceae</taxon>
        <taxon>Dictyostelium</taxon>
    </lineage>
</organism>
<keyword id="KW-0106">Calcium</keyword>
<keyword id="KW-0479">Metal-binding</keyword>
<keyword id="KW-1185">Reference proteome</keyword>
<keyword id="KW-0677">Repeat</keyword>
<proteinExistence type="inferred from homology"/>
<gene>
    <name type="primary">cbpK</name>
    <name type="ORF">DDB_G0274359</name>
</gene>
<protein>
    <recommendedName>
        <fullName>Calcium-binding protein K</fullName>
    </recommendedName>
</protein>
<evidence type="ECO:0000255" key="1">
    <source>
        <dbReference type="PROSITE-ProRule" id="PRU00448"/>
    </source>
</evidence>
<evidence type="ECO:0000305" key="2"/>
<feature type="chain" id="PRO_0000323764" description="Calcium-binding protein K">
    <location>
        <begin position="1"/>
        <end position="192"/>
    </location>
</feature>
<feature type="domain" description="EF-hand 1" evidence="1">
    <location>
        <begin position="60"/>
        <end position="95"/>
    </location>
</feature>
<feature type="domain" description="EF-hand 2" evidence="1">
    <location>
        <begin position="96"/>
        <end position="131"/>
    </location>
</feature>
<feature type="binding site" evidence="1">
    <location>
        <position position="73"/>
    </location>
    <ligand>
        <name>Ca(2+)</name>
        <dbReference type="ChEBI" id="CHEBI:29108"/>
        <label>1</label>
    </ligand>
</feature>
<feature type="binding site" evidence="1">
    <location>
        <position position="75"/>
    </location>
    <ligand>
        <name>Ca(2+)</name>
        <dbReference type="ChEBI" id="CHEBI:29108"/>
        <label>1</label>
    </ligand>
</feature>
<feature type="binding site" evidence="1">
    <location>
        <position position="77"/>
    </location>
    <ligand>
        <name>Ca(2+)</name>
        <dbReference type="ChEBI" id="CHEBI:29108"/>
        <label>1</label>
    </ligand>
</feature>
<feature type="binding site" evidence="1">
    <location>
        <position position="84"/>
    </location>
    <ligand>
        <name>Ca(2+)</name>
        <dbReference type="ChEBI" id="CHEBI:29108"/>
        <label>1</label>
    </ligand>
</feature>
<feature type="binding site" evidence="1">
    <location>
        <position position="109"/>
    </location>
    <ligand>
        <name>Ca(2+)</name>
        <dbReference type="ChEBI" id="CHEBI:29108"/>
        <label>2</label>
    </ligand>
</feature>
<feature type="binding site" evidence="1">
    <location>
        <position position="111"/>
    </location>
    <ligand>
        <name>Ca(2+)</name>
        <dbReference type="ChEBI" id="CHEBI:29108"/>
        <label>2</label>
    </ligand>
</feature>
<feature type="binding site" evidence="1">
    <location>
        <position position="113"/>
    </location>
    <ligand>
        <name>Ca(2+)</name>
        <dbReference type="ChEBI" id="CHEBI:29108"/>
        <label>2</label>
    </ligand>
</feature>
<feature type="binding site" evidence="1">
    <location>
        <position position="115"/>
    </location>
    <ligand>
        <name>Ca(2+)</name>
        <dbReference type="ChEBI" id="CHEBI:29108"/>
        <label>2</label>
    </ligand>
</feature>
<feature type="binding site" evidence="1">
    <location>
        <position position="120"/>
    </location>
    <ligand>
        <name>Ca(2+)</name>
        <dbReference type="ChEBI" id="CHEBI:29108"/>
        <label>2</label>
    </ligand>
</feature>
<feature type="sequence conflict" description="In Ref. 1; AAT72748." evidence="2" ref="1">
    <original>E</original>
    <variation>G</variation>
    <location>
        <position position="23"/>
    </location>
</feature>
<feature type="sequence conflict" description="In Ref. 1; AAT72748." evidence="2" ref="1">
    <original>A</original>
    <variation>T</variation>
    <location>
        <position position="93"/>
    </location>
</feature>
<feature type="sequence conflict" description="In Ref. 3; EAL70072." evidence="2" ref="3">
    <original>F</original>
    <variation>I</variation>
    <location>
        <position position="103"/>
    </location>
</feature>
<feature type="sequence conflict" description="In Ref. 3; EAL70072." evidence="2" ref="3">
    <original>S</original>
    <variation>F</variation>
    <location>
        <position position="148"/>
    </location>
</feature>
<feature type="sequence conflict" description="In Ref. 3; EAL70072." evidence="2" ref="3">
    <original>S</original>
    <variation>F</variation>
    <location>
        <position position="174"/>
    </location>
</feature>
<feature type="sequence conflict" description="In Ref. 3; EAL70072." evidence="2" ref="3">
    <original>Q</original>
    <variation>P</variation>
    <location>
        <position position="190"/>
    </location>
</feature>
<comment type="similarity">
    <text evidence="2">Belongs to the recoverin family.</text>
</comment>
<comment type="sequence caution" evidence="2">
    <conflict type="erroneous termination">
        <sequence resource="EMBL-CDS" id="EAL70072"/>
    </conflict>
    <text>Truncated C-terminus.</text>
</comment>
<reference key="1">
    <citation type="journal article" date="2004" name="Dev. Growth Differ.">
        <title>Disruption of the NCS-1/frequenin-related ncsA gene in Dictyostelium discoideum accelerates development.</title>
        <authorList>
            <person name="Coukell B."/>
            <person name="Cameron A."/>
            <person name="Perusini S."/>
            <person name="Shim K."/>
        </authorList>
    </citation>
    <scope>NUCLEOTIDE SEQUENCE [GENOMIC DNA]</scope>
    <source>
        <strain>AX4</strain>
    </source>
</reference>
<reference key="2">
    <citation type="journal article" date="2002" name="Nature">
        <title>Sequence and analysis of chromosome 2 of Dictyostelium discoideum.</title>
        <authorList>
            <person name="Gloeckner G."/>
            <person name="Eichinger L."/>
            <person name="Szafranski K."/>
            <person name="Pachebat J.A."/>
            <person name="Bankier A.T."/>
            <person name="Dear P.H."/>
            <person name="Lehmann R."/>
            <person name="Baumgart C."/>
            <person name="Parra G."/>
            <person name="Abril J.F."/>
            <person name="Guigo R."/>
            <person name="Kumpf K."/>
            <person name="Tunggal B."/>
            <person name="Cox E.C."/>
            <person name="Quail M.A."/>
            <person name="Platzer M."/>
            <person name="Rosenthal A."/>
            <person name="Noegel A.A."/>
        </authorList>
    </citation>
    <scope>NUCLEOTIDE SEQUENCE [LARGE SCALE GENOMIC DNA]</scope>
    <source>
        <strain>AX4</strain>
    </source>
</reference>
<reference key="3">
    <citation type="journal article" date="2005" name="Nature">
        <title>The genome of the social amoeba Dictyostelium discoideum.</title>
        <authorList>
            <person name="Eichinger L."/>
            <person name="Pachebat J.A."/>
            <person name="Gloeckner G."/>
            <person name="Rajandream M.A."/>
            <person name="Sucgang R."/>
            <person name="Berriman M."/>
            <person name="Song J."/>
            <person name="Olsen R."/>
            <person name="Szafranski K."/>
            <person name="Xu Q."/>
            <person name="Tunggal B."/>
            <person name="Kummerfeld S."/>
            <person name="Madera M."/>
            <person name="Konfortov B.A."/>
            <person name="Rivero F."/>
            <person name="Bankier A.T."/>
            <person name="Lehmann R."/>
            <person name="Hamlin N."/>
            <person name="Davies R."/>
            <person name="Gaudet P."/>
            <person name="Fey P."/>
            <person name="Pilcher K."/>
            <person name="Chen G."/>
            <person name="Saunders D."/>
            <person name="Sodergren E.J."/>
            <person name="Davis P."/>
            <person name="Kerhornou A."/>
            <person name="Nie X."/>
            <person name="Hall N."/>
            <person name="Anjard C."/>
            <person name="Hemphill L."/>
            <person name="Bason N."/>
            <person name="Farbrother P."/>
            <person name="Desany B."/>
            <person name="Just E."/>
            <person name="Morio T."/>
            <person name="Rost R."/>
            <person name="Churcher C.M."/>
            <person name="Cooper J."/>
            <person name="Haydock S."/>
            <person name="van Driessche N."/>
            <person name="Cronin A."/>
            <person name="Goodhead I."/>
            <person name="Muzny D.M."/>
            <person name="Mourier T."/>
            <person name="Pain A."/>
            <person name="Lu M."/>
            <person name="Harper D."/>
            <person name="Lindsay R."/>
            <person name="Hauser H."/>
            <person name="James K.D."/>
            <person name="Quiles M."/>
            <person name="Madan Babu M."/>
            <person name="Saito T."/>
            <person name="Buchrieser C."/>
            <person name="Wardroper A."/>
            <person name="Felder M."/>
            <person name="Thangavelu M."/>
            <person name="Johnson D."/>
            <person name="Knights A."/>
            <person name="Loulseged H."/>
            <person name="Mungall K.L."/>
            <person name="Oliver K."/>
            <person name="Price C."/>
            <person name="Quail M.A."/>
            <person name="Urushihara H."/>
            <person name="Hernandez J."/>
            <person name="Rabbinowitsch E."/>
            <person name="Steffen D."/>
            <person name="Sanders M."/>
            <person name="Ma J."/>
            <person name="Kohara Y."/>
            <person name="Sharp S."/>
            <person name="Simmonds M.N."/>
            <person name="Spiegler S."/>
            <person name="Tivey A."/>
            <person name="Sugano S."/>
            <person name="White B."/>
            <person name="Walker D."/>
            <person name="Woodward J.R."/>
            <person name="Winckler T."/>
            <person name="Tanaka Y."/>
            <person name="Shaulsky G."/>
            <person name="Schleicher M."/>
            <person name="Weinstock G.M."/>
            <person name="Rosenthal A."/>
            <person name="Cox E.C."/>
            <person name="Chisholm R.L."/>
            <person name="Gibbs R.A."/>
            <person name="Loomis W.F."/>
            <person name="Platzer M."/>
            <person name="Kay R.R."/>
            <person name="Williams J.G."/>
            <person name="Dear P.H."/>
            <person name="Noegel A.A."/>
            <person name="Barrell B.G."/>
            <person name="Kuspa A."/>
        </authorList>
    </citation>
    <scope>NUCLEOTIDE SEQUENCE [LARGE SCALE GENOMIC DNA]</scope>
    <source>
        <strain>AX4</strain>
    </source>
</reference>
<accession>Q86IV7</accession>
<accession>Q556C1</accession>
<accession>Q6DN50</accession>